<reference key="1">
    <citation type="journal article" date="1995" name="Development">
        <title>Conservation of Brachyury (T) genes in amphioxus and vertebrates: developmental and evolutionary implications.</title>
        <authorList>
            <person name="Holland P.W.H."/>
            <person name="Koschorz B."/>
            <person name="Holland L.Z."/>
            <person name="Herrmann B.G."/>
        </authorList>
    </citation>
    <scope>NUCLEOTIDE SEQUENCE</scope>
</reference>
<name>TBXT2_BRAFL</name>
<proteinExistence type="evidence at transcript level"/>
<sequence>MKQTPDQFSVSHLLSAVESEISAGSEKGDPTERDLKVTLGEKPLWEKFKSLTNEMIVTKSGRRMFPVLKVNVSGLDPNAMYSFLLDFTAADNHRWKYVNGEWVPGGKPEPSVPSCVYIHPDSPNFGAHWMKSPVSFSKVKLTNKLNGGGQQIMLNSLHKYEPRIHIVKVGGPDNQRTLSTHTFAETQFIAVTAYQNEELTALKIKHNPFAKAFLDAKERNDTKSGHDDLTDQQPQFSQLGGWFLPGTGPICPPPNPHQFAPSLGLPSHGCDRYSTLRNHRSAPYPHPYQRSSPPTNYGHDTAASLPMMPTHDNWSGLPVSTHNMLSMSAMPHTTTSTHAQYPNLWSVSNNNLTPTTHAQTHMSGTMGTGLPHQFLRTTAPAPYHSIPTCTVPTTASSSPVYHDSHEVSSTDSGYGHSTTPPAPQTRITSNNWSPMTMPSM</sequence>
<feature type="chain" id="PRO_0000184420" description="T-box transcription factor T homolog 2">
    <location>
        <begin position="1"/>
        <end position="440"/>
    </location>
</feature>
<feature type="DNA-binding region" description="T-box" evidence="3">
    <location>
        <begin position="44"/>
        <end position="215"/>
    </location>
</feature>
<feature type="region of interest" description="Disordered" evidence="4">
    <location>
        <begin position="282"/>
        <end position="303"/>
    </location>
</feature>
<feature type="region of interest" description="Disordered" evidence="4">
    <location>
        <begin position="393"/>
        <end position="440"/>
    </location>
</feature>
<feature type="compositionally biased region" description="Polar residues" evidence="4">
    <location>
        <begin position="409"/>
        <end position="440"/>
    </location>
</feature>
<organism>
    <name type="scientific">Branchiostoma floridae</name>
    <name type="common">Florida lancelet</name>
    <name type="synonym">Amphioxus</name>
    <dbReference type="NCBI Taxonomy" id="7739"/>
    <lineage>
        <taxon>Eukaryota</taxon>
        <taxon>Metazoa</taxon>
        <taxon>Chordata</taxon>
        <taxon>Cephalochordata</taxon>
        <taxon>Leptocardii</taxon>
        <taxon>Amphioxiformes</taxon>
        <taxon>Branchiostomatidae</taxon>
        <taxon>Branchiostoma</taxon>
    </lineage>
</organism>
<dbReference type="RefSeq" id="XP_002590390.1">
    <property type="nucleotide sequence ID" value="XM_002590344.1"/>
</dbReference>
<dbReference type="SMR" id="P80492"/>
<dbReference type="eggNOG" id="KOG3585">
    <property type="taxonomic scope" value="Eukaryota"/>
</dbReference>
<dbReference type="OMA" id="TGAGECP"/>
<dbReference type="OrthoDB" id="7442607at2759"/>
<dbReference type="Proteomes" id="UP000001554">
    <property type="component" value="Unplaced"/>
</dbReference>
<dbReference type="GO" id="GO:0005634">
    <property type="term" value="C:nucleus"/>
    <property type="evidence" value="ECO:0007669"/>
    <property type="project" value="UniProtKB-SubCell"/>
</dbReference>
<dbReference type="GO" id="GO:0003700">
    <property type="term" value="F:DNA-binding transcription factor activity"/>
    <property type="evidence" value="ECO:0007669"/>
    <property type="project" value="InterPro"/>
</dbReference>
<dbReference type="GO" id="GO:0000978">
    <property type="term" value="F:RNA polymerase II cis-regulatory region sequence-specific DNA binding"/>
    <property type="evidence" value="ECO:0007669"/>
    <property type="project" value="InterPro"/>
</dbReference>
<dbReference type="GO" id="GO:0045893">
    <property type="term" value="P:positive regulation of DNA-templated transcription"/>
    <property type="evidence" value="ECO:0007669"/>
    <property type="project" value="InterPro"/>
</dbReference>
<dbReference type="CDD" id="cd20192">
    <property type="entry name" value="T-box_TBXT_TBX19-like"/>
    <property type="match status" value="1"/>
</dbReference>
<dbReference type="FunFam" id="2.60.40.820:FF:000002">
    <property type="entry name" value="T-box transcription factor Brachyury"/>
    <property type="match status" value="1"/>
</dbReference>
<dbReference type="Gene3D" id="2.60.40.820">
    <property type="entry name" value="Transcription factor, T-box"/>
    <property type="match status" value="1"/>
</dbReference>
<dbReference type="InterPro" id="IPR008967">
    <property type="entry name" value="p53-like_TF_DNA-bd_sf"/>
</dbReference>
<dbReference type="InterPro" id="IPR046360">
    <property type="entry name" value="T-box_DNA-bd"/>
</dbReference>
<dbReference type="InterPro" id="IPR036960">
    <property type="entry name" value="T-box_sf"/>
</dbReference>
<dbReference type="InterPro" id="IPR002070">
    <property type="entry name" value="TF_Brachyury"/>
</dbReference>
<dbReference type="InterPro" id="IPR001699">
    <property type="entry name" value="TF_T-box"/>
</dbReference>
<dbReference type="InterPro" id="IPR018186">
    <property type="entry name" value="TF_T-box_CS"/>
</dbReference>
<dbReference type="PANTHER" id="PTHR11267">
    <property type="entry name" value="T-BOX PROTEIN-RELATED"/>
    <property type="match status" value="1"/>
</dbReference>
<dbReference type="PANTHER" id="PTHR11267:SF106">
    <property type="entry name" value="T-RELATED PROTEIN"/>
    <property type="match status" value="1"/>
</dbReference>
<dbReference type="Pfam" id="PF00907">
    <property type="entry name" value="T-box"/>
    <property type="match status" value="1"/>
</dbReference>
<dbReference type="PRINTS" id="PR00938">
    <property type="entry name" value="BRACHYURY"/>
</dbReference>
<dbReference type="PRINTS" id="PR00937">
    <property type="entry name" value="TBOX"/>
</dbReference>
<dbReference type="SMART" id="SM00425">
    <property type="entry name" value="TBOX"/>
    <property type="match status" value="1"/>
</dbReference>
<dbReference type="SUPFAM" id="SSF49417">
    <property type="entry name" value="p53-like transcription factors"/>
    <property type="match status" value="1"/>
</dbReference>
<dbReference type="PROSITE" id="PS01283">
    <property type="entry name" value="TBOX_1"/>
    <property type="match status" value="1"/>
</dbReference>
<dbReference type="PROSITE" id="PS01264">
    <property type="entry name" value="TBOX_2"/>
    <property type="match status" value="1"/>
</dbReference>
<dbReference type="PROSITE" id="PS50252">
    <property type="entry name" value="TBOX_3"/>
    <property type="match status" value="1"/>
</dbReference>
<protein>
    <recommendedName>
        <fullName evidence="5">T-box transcription factor T homolog 2</fullName>
    </recommendedName>
    <alternativeName>
        <fullName>AmBra-2</fullName>
    </alternativeName>
    <alternativeName>
        <fullName evidence="5">Brachyury protein homolog 2</fullName>
    </alternativeName>
</protein>
<evidence type="ECO:0000250" key="1"/>
<evidence type="ECO:0000250" key="2">
    <source>
        <dbReference type="UniProtKB" id="O15178"/>
    </source>
</evidence>
<evidence type="ECO:0000255" key="3">
    <source>
        <dbReference type="PROSITE-ProRule" id="PRU00201"/>
    </source>
</evidence>
<evidence type="ECO:0000256" key="4">
    <source>
        <dbReference type="SAM" id="MobiDB-lite"/>
    </source>
</evidence>
<evidence type="ECO:0000305" key="5"/>
<comment type="function">
    <text evidence="1">Involved in the transcriptional regulation of genes required for mesoderm formation and differentiation.</text>
</comment>
<comment type="subcellular location">
    <subcellularLocation>
        <location evidence="3">Nucleus</location>
    </subcellularLocation>
</comment>
<comment type="tissue specificity">
    <text>Mesoderm and notochord.</text>
</comment>
<accession>P80492</accession>
<gene>
    <name evidence="2" type="primary">TBXT</name>
    <name type="synonym">BRA-2</name>
</gene>
<keyword id="KW-0217">Developmental protein</keyword>
<keyword id="KW-0238">DNA-binding</keyword>
<keyword id="KW-0539">Nucleus</keyword>
<keyword id="KW-1185">Reference proteome</keyword>
<keyword id="KW-0804">Transcription</keyword>
<keyword id="KW-0805">Transcription regulation</keyword>